<gene>
    <name type="ordered locus">PH1839</name>
</gene>
<feature type="chain" id="PRO_0000136086" description="RNA-free ribonuclease P">
    <location>
        <begin position="1"/>
        <end position="204"/>
    </location>
</feature>
<proteinExistence type="inferred from homology"/>
<comment type="function">
    <text evidence="1">RNA-free RNase P that catalyzes the removal of the 5'-leader sequence from pre-tRNA to produce the mature 5'-terminus.</text>
</comment>
<comment type="catalytic activity">
    <reaction evidence="1">
        <text>Endonucleolytic cleavage of RNA, removing 5'-extranucleotides from tRNA precursor.</text>
        <dbReference type="EC" id="3.1.26.5"/>
    </reaction>
</comment>
<comment type="similarity">
    <text evidence="1">Belongs to the HARP family.</text>
</comment>
<comment type="sequence caution" evidence="2">
    <conflict type="erroneous initiation">
        <sequence resource="EMBL-CDS" id="BAA30959"/>
    </conflict>
</comment>
<sequence>MIKFVLDTSIFVNPDVRKKFGETPTEAMKTFLHYAENLFGKVEFYMPPGIYRELMHFVEEEEVSPDIELYIIKKPPNVHDIKIPAFVVYELIEDIRRRVDKGLRVAEKAVRESVIDTSNVDKIIQKLRRNYRKALREGILDSKEDFELILLAKEIDGIIVSADVGILTWAEKMGIKWVDAFKFKEVLSELVEKFKRSESEKERK</sequence>
<protein>
    <recommendedName>
        <fullName evidence="1">RNA-free ribonuclease P</fullName>
        <shortName evidence="1">RNA-free RNase P</shortName>
        <ecNumber evidence="1">3.1.26.5</ecNumber>
    </recommendedName>
    <alternativeName>
        <fullName evidence="1">Protein-only RNase P</fullName>
    </alternativeName>
</protein>
<accession>O59517</accession>
<name>RFRNP_PYRHO</name>
<organism>
    <name type="scientific">Pyrococcus horikoshii (strain ATCC 700860 / DSM 12428 / JCM 9974 / NBRC 100139 / OT-3)</name>
    <dbReference type="NCBI Taxonomy" id="70601"/>
    <lineage>
        <taxon>Archaea</taxon>
        <taxon>Methanobacteriati</taxon>
        <taxon>Methanobacteriota</taxon>
        <taxon>Thermococci</taxon>
        <taxon>Thermococcales</taxon>
        <taxon>Thermococcaceae</taxon>
        <taxon>Pyrococcus</taxon>
    </lineage>
</organism>
<evidence type="ECO:0000255" key="1">
    <source>
        <dbReference type="HAMAP-Rule" id="MF_01078"/>
    </source>
</evidence>
<evidence type="ECO:0000305" key="2"/>
<dbReference type="EC" id="3.1.26.5" evidence="1"/>
<dbReference type="EMBL" id="BA000001">
    <property type="protein sequence ID" value="BAA30959.1"/>
    <property type="status" value="ALT_INIT"/>
    <property type="molecule type" value="Genomic_DNA"/>
</dbReference>
<dbReference type="PIR" id="H71195">
    <property type="entry name" value="H71195"/>
</dbReference>
<dbReference type="RefSeq" id="WP_048053492.1">
    <property type="nucleotide sequence ID" value="NC_000961.1"/>
</dbReference>
<dbReference type="SMR" id="O59517"/>
<dbReference type="STRING" id="70601.gene:9378842"/>
<dbReference type="DNASU" id="1442680"/>
<dbReference type="EnsemblBacteria" id="BAA30959">
    <property type="protein sequence ID" value="BAA30959"/>
    <property type="gene ID" value="BAA30959"/>
</dbReference>
<dbReference type="GeneID" id="1442680"/>
<dbReference type="KEGG" id="pho:PH1839"/>
<dbReference type="eggNOG" id="arCOG00720">
    <property type="taxonomic scope" value="Archaea"/>
</dbReference>
<dbReference type="OrthoDB" id="95197at2157"/>
<dbReference type="Proteomes" id="UP000000752">
    <property type="component" value="Chromosome"/>
</dbReference>
<dbReference type="GO" id="GO:0004526">
    <property type="term" value="F:ribonuclease P activity"/>
    <property type="evidence" value="ECO:0007669"/>
    <property type="project" value="UniProtKB-UniRule"/>
</dbReference>
<dbReference type="GO" id="GO:0001682">
    <property type="term" value="P:tRNA 5'-leader removal"/>
    <property type="evidence" value="ECO:0007669"/>
    <property type="project" value="UniProtKB-UniRule"/>
</dbReference>
<dbReference type="CDD" id="cd18691">
    <property type="entry name" value="PIN_VapC-like"/>
    <property type="match status" value="1"/>
</dbReference>
<dbReference type="HAMAP" id="MF_01078">
    <property type="entry name" value="RNA_free_RNase_P"/>
    <property type="match status" value="1"/>
</dbReference>
<dbReference type="InterPro" id="IPR029060">
    <property type="entry name" value="PIN-like_dom_sf"/>
</dbReference>
<dbReference type="InterPro" id="IPR014856">
    <property type="entry name" value="RNA_free_RNase_P"/>
</dbReference>
<dbReference type="NCBIfam" id="NF003342">
    <property type="entry name" value="PRK04358.1-3"/>
    <property type="match status" value="1"/>
</dbReference>
<dbReference type="NCBIfam" id="TIGR03875">
    <property type="entry name" value="RNA_lig_partner"/>
    <property type="match status" value="1"/>
</dbReference>
<dbReference type="PANTHER" id="PTHR41173:SF1">
    <property type="entry name" value="RNA-FREE RIBONUCLEASE P"/>
    <property type="match status" value="1"/>
</dbReference>
<dbReference type="PANTHER" id="PTHR41173">
    <property type="entry name" value="UPF0278 PROTEIN TK1425"/>
    <property type="match status" value="1"/>
</dbReference>
<dbReference type="Pfam" id="PF08745">
    <property type="entry name" value="PIN_5"/>
    <property type="match status" value="1"/>
</dbReference>
<dbReference type="SUPFAM" id="SSF88723">
    <property type="entry name" value="PIN domain-like"/>
    <property type="match status" value="1"/>
</dbReference>
<reference key="1">
    <citation type="journal article" date="1998" name="DNA Res.">
        <title>Complete sequence and gene organization of the genome of a hyper-thermophilic archaebacterium, Pyrococcus horikoshii OT3.</title>
        <authorList>
            <person name="Kawarabayasi Y."/>
            <person name="Sawada M."/>
            <person name="Horikawa H."/>
            <person name="Haikawa Y."/>
            <person name="Hino Y."/>
            <person name="Yamamoto S."/>
            <person name="Sekine M."/>
            <person name="Baba S."/>
            <person name="Kosugi H."/>
            <person name="Hosoyama A."/>
            <person name="Nagai Y."/>
            <person name="Sakai M."/>
            <person name="Ogura K."/>
            <person name="Otsuka R."/>
            <person name="Nakazawa H."/>
            <person name="Takamiya M."/>
            <person name="Ohfuku Y."/>
            <person name="Funahashi T."/>
            <person name="Tanaka T."/>
            <person name="Kudoh Y."/>
            <person name="Yamazaki J."/>
            <person name="Kushida N."/>
            <person name="Oguchi A."/>
            <person name="Aoki K."/>
            <person name="Yoshizawa T."/>
            <person name="Nakamura Y."/>
            <person name="Robb F.T."/>
            <person name="Horikoshi K."/>
            <person name="Masuchi Y."/>
            <person name="Shizuya H."/>
            <person name="Kikuchi H."/>
        </authorList>
    </citation>
    <scope>NUCLEOTIDE SEQUENCE [LARGE SCALE GENOMIC DNA]</scope>
    <source>
        <strain>ATCC 700860 / DSM 12428 / JCM 9974 / NBRC 100139 / OT-3</strain>
    </source>
</reference>
<keyword id="KW-0255">Endonuclease</keyword>
<keyword id="KW-0378">Hydrolase</keyword>
<keyword id="KW-0540">Nuclease</keyword>
<keyword id="KW-0819">tRNA processing</keyword>